<accession>Q86U44</accession>
<accession>O14736</accession>
<accession>Q86V05</accession>
<accession>Q9HB32</accession>
<dbReference type="EC" id="2.1.1.348" evidence="14 15 17 20 21 26"/>
<dbReference type="EMBL" id="AF014837">
    <property type="protein sequence ID" value="AAB71850.1"/>
    <property type="molecule type" value="Genomic_DNA"/>
</dbReference>
<dbReference type="EMBL" id="AF283991">
    <property type="protein sequence ID" value="AAG13956.1"/>
    <property type="molecule type" value="Genomic_DNA"/>
</dbReference>
<dbReference type="EMBL" id="AE000658">
    <property type="status" value="NOT_ANNOTATED_CDS"/>
    <property type="molecule type" value="Genomic_DNA"/>
</dbReference>
<dbReference type="EMBL" id="BX247964">
    <property type="protein sequence ID" value="CAD62303.1"/>
    <property type="molecule type" value="mRNA"/>
</dbReference>
<dbReference type="EMBL" id="BC003031">
    <property type="protein sequence ID" value="AAH03031.1"/>
    <property type="molecule type" value="mRNA"/>
</dbReference>
<dbReference type="EMBL" id="BC001650">
    <property type="protein sequence ID" value="AAH01650.1"/>
    <property type="molecule type" value="mRNA"/>
</dbReference>
<dbReference type="EMBL" id="BC052244">
    <property type="protein sequence ID" value="AAH52244.1"/>
    <property type="molecule type" value="mRNA"/>
</dbReference>
<dbReference type="CCDS" id="CCDS32044.1">
    <molecule id="Q86U44-1"/>
</dbReference>
<dbReference type="RefSeq" id="NP_062826.2">
    <molecule id="Q86U44-1"/>
    <property type="nucleotide sequence ID" value="NM_019852.4"/>
</dbReference>
<dbReference type="PDB" id="5IL0">
    <property type="method" value="X-ray"/>
    <property type="resolution" value="1.88 A"/>
    <property type="chains" value="A=369-580"/>
</dbReference>
<dbReference type="PDB" id="5IL1">
    <property type="method" value="X-ray"/>
    <property type="resolution" value="1.71 A"/>
    <property type="chains" value="A=369-580"/>
</dbReference>
<dbReference type="PDB" id="5IL2">
    <property type="method" value="X-ray"/>
    <property type="resolution" value="1.61 A"/>
    <property type="chains" value="A=369-580"/>
</dbReference>
<dbReference type="PDB" id="5K7M">
    <property type="method" value="X-ray"/>
    <property type="resolution" value="1.65 A"/>
    <property type="chains" value="A=357-580"/>
</dbReference>
<dbReference type="PDB" id="5K7U">
    <property type="method" value="X-ray"/>
    <property type="resolution" value="1.70 A"/>
    <property type="chains" value="A=357-580"/>
</dbReference>
<dbReference type="PDB" id="5K7W">
    <property type="method" value="X-ray"/>
    <property type="resolution" value="1.65 A"/>
    <property type="chains" value="A=357-580"/>
</dbReference>
<dbReference type="PDB" id="5L6D">
    <property type="method" value="X-ray"/>
    <property type="resolution" value="1.85 A"/>
    <property type="chains" value="A=354-580"/>
</dbReference>
<dbReference type="PDB" id="5L6E">
    <property type="method" value="X-ray"/>
    <property type="resolution" value="1.90 A"/>
    <property type="chains" value="A=354-580"/>
</dbReference>
<dbReference type="PDB" id="5TEY">
    <property type="method" value="X-ray"/>
    <property type="resolution" value="1.80 A"/>
    <property type="chains" value="A=1-580"/>
</dbReference>
<dbReference type="PDB" id="5YZ9">
    <property type="method" value="Other"/>
    <property type="chains" value="A=259-357"/>
</dbReference>
<dbReference type="PDB" id="6TTP">
    <property type="method" value="X-ray"/>
    <property type="resolution" value="2.00 A"/>
    <property type="chains" value="A=1-580"/>
</dbReference>
<dbReference type="PDB" id="6TTT">
    <property type="method" value="X-ray"/>
    <property type="resolution" value="2.30 A"/>
    <property type="chains" value="A=1-580"/>
</dbReference>
<dbReference type="PDB" id="6TTV">
    <property type="method" value="X-ray"/>
    <property type="resolution" value="2.14 A"/>
    <property type="chains" value="A=1-580"/>
</dbReference>
<dbReference type="PDB" id="6TTW">
    <property type="method" value="X-ray"/>
    <property type="resolution" value="2.20 A"/>
    <property type="chains" value="A=1-580"/>
</dbReference>
<dbReference type="PDB" id="6TTX">
    <property type="method" value="X-ray"/>
    <property type="resolution" value="2.00 A"/>
    <property type="chains" value="A=1-580"/>
</dbReference>
<dbReference type="PDB" id="6TU1">
    <property type="method" value="X-ray"/>
    <property type="resolution" value="2.31 A"/>
    <property type="chains" value="A=1-580"/>
</dbReference>
<dbReference type="PDB" id="6Y4G">
    <property type="method" value="X-ray"/>
    <property type="resolution" value="1.90 A"/>
    <property type="chains" value="A=1-580"/>
</dbReference>
<dbReference type="PDB" id="7ACD">
    <property type="method" value="X-ray"/>
    <property type="resolution" value="2.50 A"/>
    <property type="chains" value="A=354-580"/>
</dbReference>
<dbReference type="PDB" id="7NHG">
    <property type="method" value="X-ray"/>
    <property type="resolution" value="2.50 A"/>
    <property type="chains" value="A=354-580"/>
</dbReference>
<dbReference type="PDB" id="7NHH">
    <property type="method" value="X-ray"/>
    <property type="resolution" value="2.10 A"/>
    <property type="chains" value="A=354-580"/>
</dbReference>
<dbReference type="PDB" id="7NHI">
    <property type="method" value="X-ray"/>
    <property type="resolution" value="1.85 A"/>
    <property type="chains" value="A=354-580"/>
</dbReference>
<dbReference type="PDB" id="7NHJ">
    <property type="method" value="X-ray"/>
    <property type="resolution" value="2.16 A"/>
    <property type="chains" value="A=354-580"/>
</dbReference>
<dbReference type="PDB" id="7NHV">
    <property type="method" value="X-ray"/>
    <property type="resolution" value="1.91 A"/>
    <property type="chains" value="A=354-580"/>
</dbReference>
<dbReference type="PDB" id="7NI7">
    <property type="method" value="X-ray"/>
    <property type="resolution" value="2.50 A"/>
    <property type="chains" value="A=354-580"/>
</dbReference>
<dbReference type="PDB" id="7NI8">
    <property type="method" value="X-ray"/>
    <property type="resolution" value="2.20 A"/>
    <property type="chains" value="A=354-580"/>
</dbReference>
<dbReference type="PDB" id="7NI9">
    <property type="method" value="X-ray"/>
    <property type="resolution" value="2.20 A"/>
    <property type="chains" value="A=354-580"/>
</dbReference>
<dbReference type="PDB" id="7NIA">
    <property type="method" value="X-ray"/>
    <property type="resolution" value="2.30 A"/>
    <property type="chains" value="A=354-580"/>
</dbReference>
<dbReference type="PDB" id="7NID">
    <property type="method" value="X-ray"/>
    <property type="resolution" value="2.30 A"/>
    <property type="chains" value="A=354-580"/>
</dbReference>
<dbReference type="PDB" id="7O08">
    <property type="method" value="X-ray"/>
    <property type="resolution" value="2.00 A"/>
    <property type="chains" value="A=354-580"/>
</dbReference>
<dbReference type="PDB" id="7O09">
    <property type="method" value="X-ray"/>
    <property type="resolution" value="1.80 A"/>
    <property type="chains" value="A=354-580"/>
</dbReference>
<dbReference type="PDB" id="7O0L">
    <property type="method" value="X-ray"/>
    <property type="resolution" value="1.90 A"/>
    <property type="chains" value="A=354-580"/>
</dbReference>
<dbReference type="PDB" id="7O0M">
    <property type="method" value="X-ray"/>
    <property type="resolution" value="2.39 A"/>
    <property type="chains" value="A=354-580"/>
</dbReference>
<dbReference type="PDB" id="7O0P">
    <property type="method" value="X-ray"/>
    <property type="resolution" value="2.70 A"/>
    <property type="chains" value="A=354-580"/>
</dbReference>
<dbReference type="PDB" id="7O0Q">
    <property type="method" value="X-ray"/>
    <property type="resolution" value="2.49 A"/>
    <property type="chains" value="A=354-580"/>
</dbReference>
<dbReference type="PDB" id="7O0R">
    <property type="method" value="X-ray"/>
    <property type="resolution" value="2.30 A"/>
    <property type="chains" value="A=354-580"/>
</dbReference>
<dbReference type="PDB" id="7O27">
    <property type="method" value="X-ray"/>
    <property type="resolution" value="2.40 A"/>
    <property type="chains" value="A=354-580"/>
</dbReference>
<dbReference type="PDB" id="7O28">
    <property type="method" value="X-ray"/>
    <property type="resolution" value="2.47 A"/>
    <property type="chains" value="A=354-580"/>
</dbReference>
<dbReference type="PDB" id="7O29">
    <property type="method" value="X-ray"/>
    <property type="resolution" value="2.75 A"/>
    <property type="chains" value="A=354-580"/>
</dbReference>
<dbReference type="PDB" id="7O2E">
    <property type="method" value="X-ray"/>
    <property type="resolution" value="2.50 A"/>
    <property type="chains" value="A=354-580"/>
</dbReference>
<dbReference type="PDB" id="7O2F">
    <property type="method" value="X-ray"/>
    <property type="resolution" value="2.10 A"/>
    <property type="chains" value="A=354-580"/>
</dbReference>
<dbReference type="PDB" id="7O2H">
    <property type="method" value="X-ray"/>
    <property type="resolution" value="2.50 A"/>
    <property type="chains" value="A=354-580"/>
</dbReference>
<dbReference type="PDB" id="7O2I">
    <property type="method" value="X-ray"/>
    <property type="resolution" value="3.00 A"/>
    <property type="chains" value="A=353-580"/>
</dbReference>
<dbReference type="PDB" id="7O2X">
    <property type="method" value="X-ray"/>
    <property type="resolution" value="2.80 A"/>
    <property type="chains" value="A=354-580"/>
</dbReference>
<dbReference type="PDB" id="7OED">
    <property type="method" value="X-ray"/>
    <property type="resolution" value="2.00 A"/>
    <property type="chains" value="A=354-580"/>
</dbReference>
<dbReference type="PDB" id="7OEE">
    <property type="method" value="X-ray"/>
    <property type="resolution" value="2.70 A"/>
    <property type="chains" value="A=354-580"/>
</dbReference>
<dbReference type="PDB" id="7OEF">
    <property type="method" value="X-ray"/>
    <property type="resolution" value="2.03 A"/>
    <property type="chains" value="A=354-580"/>
</dbReference>
<dbReference type="PDB" id="7OEG">
    <property type="method" value="X-ray"/>
    <property type="resolution" value="2.79 A"/>
    <property type="chains" value="A=354-580"/>
</dbReference>
<dbReference type="PDB" id="7OEH">
    <property type="method" value="X-ray"/>
    <property type="resolution" value="2.01 A"/>
    <property type="chains" value="A=354-580"/>
</dbReference>
<dbReference type="PDB" id="7OEI">
    <property type="method" value="X-ray"/>
    <property type="resolution" value="2.48 A"/>
    <property type="chains" value="A=354-580"/>
</dbReference>
<dbReference type="PDB" id="7OEJ">
    <property type="method" value="X-ray"/>
    <property type="resolution" value="2.30 A"/>
    <property type="chains" value="A=354-580"/>
</dbReference>
<dbReference type="PDB" id="7OEK">
    <property type="method" value="X-ray"/>
    <property type="resolution" value="1.90 A"/>
    <property type="chains" value="A=354-580"/>
</dbReference>
<dbReference type="PDB" id="7OEL">
    <property type="method" value="X-ray"/>
    <property type="resolution" value="1.86 A"/>
    <property type="chains" value="A=354-580"/>
</dbReference>
<dbReference type="PDB" id="7OEM">
    <property type="method" value="X-ray"/>
    <property type="resolution" value="2.20 A"/>
    <property type="chains" value="A=354-580"/>
</dbReference>
<dbReference type="PDB" id="7OQL">
    <property type="method" value="X-ray"/>
    <property type="resolution" value="2.50 A"/>
    <property type="chains" value="A=354-580"/>
</dbReference>
<dbReference type="PDB" id="7OQO">
    <property type="method" value="X-ray"/>
    <property type="resolution" value="3.35 A"/>
    <property type="chains" value="A=354-580"/>
</dbReference>
<dbReference type="PDB" id="7OQP">
    <property type="method" value="X-ray"/>
    <property type="resolution" value="2.00 A"/>
    <property type="chains" value="A=354-580"/>
</dbReference>
<dbReference type="PDB" id="7RX6">
    <property type="method" value="X-ray"/>
    <property type="resolution" value="1.80 A"/>
    <property type="chains" value="A=357-580"/>
</dbReference>
<dbReference type="PDB" id="7RX7">
    <property type="method" value="X-ray"/>
    <property type="resolution" value="1.65 A"/>
    <property type="chains" value="A=357-580"/>
</dbReference>
<dbReference type="PDB" id="7RX8">
    <property type="method" value="X-ray"/>
    <property type="resolution" value="1.85 A"/>
    <property type="chains" value="A=357-580"/>
</dbReference>
<dbReference type="PDB" id="8BN8">
    <property type="method" value="X-ray"/>
    <property type="resolution" value="2.21 A"/>
    <property type="chains" value="AAA=363-580"/>
</dbReference>
<dbReference type="PDB" id="8PW8">
    <property type="method" value="X-ray"/>
    <property type="resolution" value="2.30 A"/>
    <property type="chains" value="A=353-580"/>
</dbReference>
<dbReference type="PDB" id="8PW9">
    <property type="method" value="X-ray"/>
    <property type="resolution" value="2.30 A"/>
    <property type="chains" value="A=353-580"/>
</dbReference>
<dbReference type="PDB" id="8PWA">
    <property type="method" value="X-ray"/>
    <property type="resolution" value="2.10 A"/>
    <property type="chains" value="A=353-580"/>
</dbReference>
<dbReference type="PDB" id="8PWB">
    <property type="method" value="X-ray"/>
    <property type="resolution" value="2.50 A"/>
    <property type="chains" value="A=353-580"/>
</dbReference>
<dbReference type="PDB" id="9G4S">
    <property type="method" value="X-ray"/>
    <property type="resolution" value="1.95 A"/>
    <property type="chains" value="A=365-578"/>
</dbReference>
<dbReference type="PDB" id="9G4U">
    <property type="method" value="X-ray"/>
    <property type="resolution" value="2.00 A"/>
    <property type="chains" value="A=367-577"/>
</dbReference>
<dbReference type="PDB" id="9G4W">
    <property type="method" value="X-ray"/>
    <property type="resolution" value="1.85 A"/>
    <property type="chains" value="A=365-577"/>
</dbReference>
<dbReference type="PDBsum" id="5IL0"/>
<dbReference type="PDBsum" id="5IL1"/>
<dbReference type="PDBsum" id="5IL2"/>
<dbReference type="PDBsum" id="5K7M"/>
<dbReference type="PDBsum" id="5K7U"/>
<dbReference type="PDBsum" id="5K7W"/>
<dbReference type="PDBsum" id="5L6D"/>
<dbReference type="PDBsum" id="5L6E"/>
<dbReference type="PDBsum" id="5TEY"/>
<dbReference type="PDBsum" id="5YZ9"/>
<dbReference type="PDBsum" id="6TTP"/>
<dbReference type="PDBsum" id="6TTT"/>
<dbReference type="PDBsum" id="6TTV"/>
<dbReference type="PDBsum" id="6TTW"/>
<dbReference type="PDBsum" id="6TTX"/>
<dbReference type="PDBsum" id="6TU1"/>
<dbReference type="PDBsum" id="6Y4G"/>
<dbReference type="PDBsum" id="7ACD"/>
<dbReference type="PDBsum" id="7NHG"/>
<dbReference type="PDBsum" id="7NHH"/>
<dbReference type="PDBsum" id="7NHI"/>
<dbReference type="PDBsum" id="7NHJ"/>
<dbReference type="PDBsum" id="7NHV"/>
<dbReference type="PDBsum" id="7NI7"/>
<dbReference type="PDBsum" id="7NI8"/>
<dbReference type="PDBsum" id="7NI9"/>
<dbReference type="PDBsum" id="7NIA"/>
<dbReference type="PDBsum" id="7NID"/>
<dbReference type="PDBsum" id="7O08"/>
<dbReference type="PDBsum" id="7O09"/>
<dbReference type="PDBsum" id="7O0L"/>
<dbReference type="PDBsum" id="7O0M"/>
<dbReference type="PDBsum" id="7O0P"/>
<dbReference type="PDBsum" id="7O0Q"/>
<dbReference type="PDBsum" id="7O0R"/>
<dbReference type="PDBsum" id="7O27"/>
<dbReference type="PDBsum" id="7O28"/>
<dbReference type="PDBsum" id="7O29"/>
<dbReference type="PDBsum" id="7O2E"/>
<dbReference type="PDBsum" id="7O2F"/>
<dbReference type="PDBsum" id="7O2H"/>
<dbReference type="PDBsum" id="7O2I"/>
<dbReference type="PDBsum" id="7O2X"/>
<dbReference type="PDBsum" id="7OED"/>
<dbReference type="PDBsum" id="7OEE"/>
<dbReference type="PDBsum" id="7OEF"/>
<dbReference type="PDBsum" id="7OEG"/>
<dbReference type="PDBsum" id="7OEH"/>
<dbReference type="PDBsum" id="7OEI"/>
<dbReference type="PDBsum" id="7OEJ"/>
<dbReference type="PDBsum" id="7OEK"/>
<dbReference type="PDBsum" id="7OEL"/>
<dbReference type="PDBsum" id="7OEM"/>
<dbReference type="PDBsum" id="7OQL"/>
<dbReference type="PDBsum" id="7OQO"/>
<dbReference type="PDBsum" id="7OQP"/>
<dbReference type="PDBsum" id="7RX6"/>
<dbReference type="PDBsum" id="7RX7"/>
<dbReference type="PDBsum" id="7RX8"/>
<dbReference type="PDBsum" id="8BN8"/>
<dbReference type="PDBsum" id="8PW8"/>
<dbReference type="PDBsum" id="8PW9"/>
<dbReference type="PDBsum" id="8PWA"/>
<dbReference type="PDBsum" id="8PWB"/>
<dbReference type="PDBsum" id="9G4S"/>
<dbReference type="PDBsum" id="9G4U"/>
<dbReference type="PDBsum" id="9G4W"/>
<dbReference type="SMR" id="Q86U44"/>
<dbReference type="BioGRID" id="121139">
    <property type="interactions" value="294"/>
</dbReference>
<dbReference type="ComplexPortal" id="CPX-21210">
    <property type="entry name" value="Methyltransferase complex, METTL3-METTL14"/>
</dbReference>
<dbReference type="CORUM" id="Q86U44"/>
<dbReference type="DIP" id="DIP-60727N"/>
<dbReference type="FunCoup" id="Q86U44">
    <property type="interactions" value="3476"/>
</dbReference>
<dbReference type="IntAct" id="Q86U44">
    <property type="interactions" value="247"/>
</dbReference>
<dbReference type="MINT" id="Q86U44"/>
<dbReference type="STRING" id="9606.ENSP00000298717"/>
<dbReference type="BindingDB" id="Q86U44"/>
<dbReference type="ChEMBL" id="CHEMBL4739695"/>
<dbReference type="GuidetoPHARMACOLOGY" id="3181"/>
<dbReference type="GlyGen" id="Q86U44">
    <property type="glycosylation" value="1 site, 1 O-linked glycan (1 site)"/>
</dbReference>
<dbReference type="iPTMnet" id="Q86U44"/>
<dbReference type="PhosphoSitePlus" id="Q86U44"/>
<dbReference type="BioMuta" id="METTL3"/>
<dbReference type="DMDM" id="33301371"/>
<dbReference type="jPOST" id="Q86U44"/>
<dbReference type="MassIVE" id="Q86U44"/>
<dbReference type="PaxDb" id="9606-ENSP00000298717"/>
<dbReference type="PeptideAtlas" id="Q86U44"/>
<dbReference type="ProteomicsDB" id="69768">
    <molecule id="Q86U44-1"/>
</dbReference>
<dbReference type="ProteomicsDB" id="69769">
    <molecule id="Q86U44-2"/>
</dbReference>
<dbReference type="Pumba" id="Q86U44"/>
<dbReference type="Antibodypedia" id="53">
    <property type="antibodies" value="180 antibodies from 30 providers"/>
</dbReference>
<dbReference type="DNASU" id="56339"/>
<dbReference type="Ensembl" id="ENST00000298717.9">
    <molecule id="Q86U44-1"/>
    <property type="protein sequence ID" value="ENSP00000298717.3"/>
    <property type="gene ID" value="ENSG00000165819.12"/>
</dbReference>
<dbReference type="GeneID" id="56339"/>
<dbReference type="KEGG" id="hsa:56339"/>
<dbReference type="MANE-Select" id="ENST00000298717.9">
    <property type="protein sequence ID" value="ENSP00000298717.3"/>
    <property type="RefSeq nucleotide sequence ID" value="NM_019852.5"/>
    <property type="RefSeq protein sequence ID" value="NP_062826.2"/>
</dbReference>
<dbReference type="UCSC" id="uc001wbc.4">
    <molecule id="Q86U44-1"/>
    <property type="organism name" value="human"/>
</dbReference>
<dbReference type="AGR" id="HGNC:17563"/>
<dbReference type="CTD" id="56339"/>
<dbReference type="DisGeNET" id="56339"/>
<dbReference type="GeneCards" id="METTL3"/>
<dbReference type="HGNC" id="HGNC:17563">
    <property type="gene designation" value="METTL3"/>
</dbReference>
<dbReference type="HPA" id="ENSG00000165819">
    <property type="expression patterns" value="Low tissue specificity"/>
</dbReference>
<dbReference type="MIM" id="612472">
    <property type="type" value="gene"/>
</dbReference>
<dbReference type="neXtProt" id="NX_Q86U44"/>
<dbReference type="OpenTargets" id="ENSG00000165819"/>
<dbReference type="PharmGKB" id="PA134955499"/>
<dbReference type="VEuPathDB" id="HostDB:ENSG00000165819"/>
<dbReference type="eggNOG" id="KOG2098">
    <property type="taxonomic scope" value="Eukaryota"/>
</dbReference>
<dbReference type="GeneTree" id="ENSGT00550000075058"/>
<dbReference type="HOGENOM" id="CLU_018702_4_0_1"/>
<dbReference type="InParanoid" id="Q86U44"/>
<dbReference type="OMA" id="HMDMEIE"/>
<dbReference type="OrthoDB" id="10262526at2759"/>
<dbReference type="PAN-GO" id="Q86U44">
    <property type="GO annotations" value="5 GO annotations based on evolutionary models"/>
</dbReference>
<dbReference type="PhylomeDB" id="Q86U44"/>
<dbReference type="TreeFam" id="TF323854"/>
<dbReference type="BRENDA" id="2.1.1.348">
    <property type="organism ID" value="2681"/>
</dbReference>
<dbReference type="PathwayCommons" id="Q86U44"/>
<dbReference type="Reactome" id="R-HSA-72203">
    <property type="pathway name" value="Processing of Capped Intron-Containing Pre-mRNA"/>
</dbReference>
<dbReference type="SignaLink" id="Q86U44"/>
<dbReference type="SIGNOR" id="Q86U44"/>
<dbReference type="BioGRID-ORCS" id="56339">
    <property type="hits" value="496 hits in 1175 CRISPR screens"/>
</dbReference>
<dbReference type="CD-CODE" id="804901D1">
    <property type="entry name" value="Nuclear speckle"/>
</dbReference>
<dbReference type="ChiTaRS" id="METTL3">
    <property type="organism name" value="human"/>
</dbReference>
<dbReference type="EvolutionaryTrace" id="Q86U44"/>
<dbReference type="GeneWiki" id="METTL3"/>
<dbReference type="GenomeRNAi" id="56339"/>
<dbReference type="Pharos" id="Q86U44">
    <property type="development level" value="Tbio"/>
</dbReference>
<dbReference type="PRO" id="PR:Q86U44"/>
<dbReference type="Proteomes" id="UP000005640">
    <property type="component" value="Chromosome 14"/>
</dbReference>
<dbReference type="RNAct" id="Q86U44">
    <property type="molecule type" value="protein"/>
</dbReference>
<dbReference type="Bgee" id="ENSG00000165819">
    <property type="expression patterns" value="Expressed in right uterine tube and 205 other cell types or tissues"/>
</dbReference>
<dbReference type="ExpressionAtlas" id="Q86U44">
    <property type="expression patterns" value="baseline and differential"/>
</dbReference>
<dbReference type="GO" id="GO:0005829">
    <property type="term" value="C:cytosol"/>
    <property type="evidence" value="ECO:0000314"/>
    <property type="project" value="HPA"/>
</dbReference>
<dbReference type="GO" id="GO:0005794">
    <property type="term" value="C:Golgi apparatus"/>
    <property type="evidence" value="ECO:0000314"/>
    <property type="project" value="HPA"/>
</dbReference>
<dbReference type="GO" id="GO:0016604">
    <property type="term" value="C:nuclear body"/>
    <property type="evidence" value="ECO:0000314"/>
    <property type="project" value="HPA"/>
</dbReference>
<dbReference type="GO" id="GO:0016607">
    <property type="term" value="C:nuclear speck"/>
    <property type="evidence" value="ECO:0000314"/>
    <property type="project" value="UniProtKB"/>
</dbReference>
<dbReference type="GO" id="GO:0005654">
    <property type="term" value="C:nucleoplasm"/>
    <property type="evidence" value="ECO:0000314"/>
    <property type="project" value="HPA"/>
</dbReference>
<dbReference type="GO" id="GO:0005634">
    <property type="term" value="C:nucleus"/>
    <property type="evidence" value="ECO:0000314"/>
    <property type="project" value="UniProtKB"/>
</dbReference>
<dbReference type="GO" id="GO:1990204">
    <property type="term" value="C:oxidoreductase complex"/>
    <property type="evidence" value="ECO:0000304"/>
    <property type="project" value="FlyBase"/>
</dbReference>
<dbReference type="GO" id="GO:0036396">
    <property type="term" value="C:RNA N6-methyladenosine methyltransferase complex"/>
    <property type="evidence" value="ECO:0000314"/>
    <property type="project" value="UniProtKB"/>
</dbReference>
<dbReference type="GO" id="GO:0003729">
    <property type="term" value="F:mRNA binding"/>
    <property type="evidence" value="ECO:0000314"/>
    <property type="project" value="UniProtKB"/>
</dbReference>
<dbReference type="GO" id="GO:0001734">
    <property type="term" value="F:mRNA m(6)A methyltransferase activity"/>
    <property type="evidence" value="ECO:0000314"/>
    <property type="project" value="UniProtKB"/>
</dbReference>
<dbReference type="GO" id="GO:0046982">
    <property type="term" value="F:protein heterodimerization activity"/>
    <property type="evidence" value="ECO:0000314"/>
    <property type="project" value="UniProtKB"/>
</dbReference>
<dbReference type="GO" id="GO:0008173">
    <property type="term" value="F:RNA methyltransferase activity"/>
    <property type="evidence" value="ECO:0000314"/>
    <property type="project" value="UniProtKB"/>
</dbReference>
<dbReference type="GO" id="GO:1904047">
    <property type="term" value="F:S-adenosyl-L-methionine binding"/>
    <property type="evidence" value="ECO:0000314"/>
    <property type="project" value="UniProtKB"/>
</dbReference>
<dbReference type="GO" id="GO:0034644">
    <property type="term" value="P:cellular response to UV"/>
    <property type="evidence" value="ECO:0000314"/>
    <property type="project" value="UniProtKB"/>
</dbReference>
<dbReference type="GO" id="GO:0007623">
    <property type="term" value="P:circadian rhythm"/>
    <property type="evidence" value="ECO:0000250"/>
    <property type="project" value="UniProtKB"/>
</dbReference>
<dbReference type="GO" id="GO:0006974">
    <property type="term" value="P:DNA damage response"/>
    <property type="evidence" value="ECO:0000314"/>
    <property type="project" value="UniProtKB"/>
</dbReference>
<dbReference type="GO" id="GO:0009048">
    <property type="term" value="P:dosage compensation by inactivation of X chromosome"/>
    <property type="evidence" value="ECO:0000314"/>
    <property type="project" value="UniProtKB"/>
</dbReference>
<dbReference type="GO" id="GO:0098508">
    <property type="term" value="P:endothelial to hematopoietic transition"/>
    <property type="evidence" value="ECO:0000250"/>
    <property type="project" value="UniProtKB"/>
</dbReference>
<dbReference type="GO" id="GO:0021861">
    <property type="term" value="P:forebrain radial glial cell differentiation"/>
    <property type="evidence" value="ECO:0000250"/>
    <property type="project" value="UniProtKB"/>
</dbReference>
<dbReference type="GO" id="GO:0042063">
    <property type="term" value="P:gliogenesis"/>
    <property type="evidence" value="ECO:0000250"/>
    <property type="project" value="UniProtKB"/>
</dbReference>
<dbReference type="GO" id="GO:0045087">
    <property type="term" value="P:innate immune response"/>
    <property type="evidence" value="ECO:0007669"/>
    <property type="project" value="UniProtKB-KW"/>
</dbReference>
<dbReference type="GO" id="GO:0061157">
    <property type="term" value="P:mRNA destabilization"/>
    <property type="evidence" value="ECO:0000250"/>
    <property type="project" value="UniProtKB"/>
</dbReference>
<dbReference type="GO" id="GO:0016556">
    <property type="term" value="P:mRNA modification"/>
    <property type="evidence" value="ECO:0000314"/>
    <property type="project" value="UniProt"/>
</dbReference>
<dbReference type="GO" id="GO:0006397">
    <property type="term" value="P:mRNA processing"/>
    <property type="evidence" value="ECO:0000314"/>
    <property type="project" value="UniProtKB"/>
</dbReference>
<dbReference type="GO" id="GO:0000398">
    <property type="term" value="P:mRNA splicing, via spliceosome"/>
    <property type="evidence" value="ECO:0000315"/>
    <property type="project" value="UniProtKB"/>
</dbReference>
<dbReference type="GO" id="GO:0045746">
    <property type="term" value="P:negative regulation of Notch signaling pathway"/>
    <property type="evidence" value="ECO:0000250"/>
    <property type="project" value="UniProtKB"/>
</dbReference>
<dbReference type="GO" id="GO:0060339">
    <property type="term" value="P:negative regulation of type I interferon-mediated signaling pathway"/>
    <property type="evidence" value="ECO:0000315"/>
    <property type="project" value="UniProtKB"/>
</dbReference>
<dbReference type="GO" id="GO:0048477">
    <property type="term" value="P:oogenesis"/>
    <property type="evidence" value="ECO:0000250"/>
    <property type="project" value="UniProtKB"/>
</dbReference>
<dbReference type="GO" id="GO:1903679">
    <property type="term" value="P:positive regulation of cap-independent translational initiation"/>
    <property type="evidence" value="ECO:0000315"/>
    <property type="project" value="UniProtKB"/>
</dbReference>
<dbReference type="GO" id="GO:0045727">
    <property type="term" value="P:positive regulation of translation"/>
    <property type="evidence" value="ECO:0000315"/>
    <property type="project" value="UniProtKB"/>
</dbReference>
<dbReference type="GO" id="GO:0031053">
    <property type="term" value="P:primary miRNA processing"/>
    <property type="evidence" value="ECO:0000314"/>
    <property type="project" value="UniProtKB"/>
</dbReference>
<dbReference type="GO" id="GO:1902036">
    <property type="term" value="P:regulation of hematopoietic stem cell differentiation"/>
    <property type="evidence" value="ECO:0000250"/>
    <property type="project" value="UniProtKB"/>
</dbReference>
<dbReference type="GO" id="GO:0051445">
    <property type="term" value="P:regulation of meiotic cell cycle"/>
    <property type="evidence" value="ECO:0000250"/>
    <property type="project" value="UniProtKB"/>
</dbReference>
<dbReference type="GO" id="GO:0045580">
    <property type="term" value="P:regulation of T cell differentiation"/>
    <property type="evidence" value="ECO:0000250"/>
    <property type="project" value="UniProtKB"/>
</dbReference>
<dbReference type="GO" id="GO:0001510">
    <property type="term" value="P:RNA methylation"/>
    <property type="evidence" value="ECO:0000315"/>
    <property type="project" value="UniProtKB"/>
</dbReference>
<dbReference type="GO" id="GO:0007283">
    <property type="term" value="P:spermatogenesis"/>
    <property type="evidence" value="ECO:0000250"/>
    <property type="project" value="UniProtKB"/>
</dbReference>
<dbReference type="GO" id="GO:0019827">
    <property type="term" value="P:stem cell population maintenance"/>
    <property type="evidence" value="ECO:0000250"/>
    <property type="project" value="UniProtKB"/>
</dbReference>
<dbReference type="Gene3D" id="3.40.50.150">
    <property type="entry name" value="Vaccinia Virus protein VP39"/>
    <property type="match status" value="1"/>
</dbReference>
<dbReference type="InterPro" id="IPR025848">
    <property type="entry name" value="MT-A70"/>
</dbReference>
<dbReference type="InterPro" id="IPR007757">
    <property type="entry name" value="MT-A70-like"/>
</dbReference>
<dbReference type="InterPro" id="IPR029063">
    <property type="entry name" value="SAM-dependent_MTases_sf"/>
</dbReference>
<dbReference type="PANTHER" id="PTHR12829">
    <property type="entry name" value="N6-ADENOSINE-METHYLTRANSFERASE"/>
    <property type="match status" value="1"/>
</dbReference>
<dbReference type="PANTHER" id="PTHR12829:SF7">
    <property type="entry name" value="N6-ADENOSINE-METHYLTRANSFERASE CATALYTIC SUBUNIT"/>
    <property type="match status" value="1"/>
</dbReference>
<dbReference type="Pfam" id="PF05063">
    <property type="entry name" value="MT-A70"/>
    <property type="match status" value="1"/>
</dbReference>
<dbReference type="SUPFAM" id="SSF53335">
    <property type="entry name" value="S-adenosyl-L-methionine-dependent methyltransferases"/>
    <property type="match status" value="1"/>
</dbReference>
<dbReference type="PROSITE" id="PS51143">
    <property type="entry name" value="MT_A70"/>
    <property type="match status" value="1"/>
</dbReference>
<dbReference type="PROSITE" id="PS51563">
    <property type="entry name" value="SAM_MTA70L_1"/>
    <property type="match status" value="1"/>
</dbReference>
<comment type="function">
    <text evidence="1 4 5 8 9 10 12 13 14 15 16 17 18 19 20 21 23 24 25 26">The METTL3-METTL14 heterodimer forms a N6-methyltransferase complex that methylates adenosine residues at the N(6) position of some RNAs and regulates various processes such as the circadian clock, differentiation of embryonic and hematopoietic stem cells, cortical neurogenesis, response to DNA damage, differentiation of T-cells and primary miRNA processing (PubMed:22575960, PubMed:24284625, PubMed:25719671, PubMed:25799998, PubMed:26321680, PubMed:26593424, PubMed:27281194, PubMed:27373337, PubMed:27627798, PubMed:28297716, PubMed:29348140, PubMed:29506078, PubMed:30428350, PubMed:9409616). In the heterodimer formed with METTL14, METTL3 constitutes the catalytic core (PubMed:27281194, PubMed:27373337, PubMed:27627798). N6-methyladenosine (m6A), which takes place at the 5'-[AG]GAC-3' consensus sites of some mRNAs, plays a role in mRNA stability, processing, translation efficiency and editing (PubMed:22575960, PubMed:24284625, PubMed:25719671, PubMed:25799998, PubMed:26321680, PubMed:26593424, PubMed:28297716, PubMed:9409616). M6A acts as a key regulator of mRNA stability: methylation is completed upon the release of mRNA into the nucleoplasm and promotes mRNA destabilization and degradation (PubMed:28637692). In embryonic stem cells (ESCs), m6A methylation of mRNAs encoding key naive pluripotency-promoting transcripts results in transcript destabilization, promoting differentiation of ESCs (By similarity). M6A regulates the length of the circadian clock: acts as an early pace-setter in the circadian loop by putting mRNA production on a fast-track for facilitating nuclear processing, thereby providing an early point of control in setting the dynamics of the feedback loop (By similarity). M6A also regulates circadian regulation of hepatic lipid metabolism (PubMed:30428350). M6A regulates spermatogonial differentiation and meiosis and is essential for male fertility and spermatogenesis (By similarity). Also required for oogenesis (By similarity). Involved in the response to DNA damage: in response to ultraviolet irradiation, METTL3 rapidly catalyzes the formation of m6A on poly(A) transcripts at DNA damage sites, leading to the recruitment of POLK to DNA damage sites (PubMed:28297716). M6A is also required for T-cell homeostasis and differentiation: m6A methylation of transcripts of SOCS family members (SOCS1, SOCS3 and CISH) in naive T-cells promotes mRNA destabilization and degradation, promoting T-cell differentiation (By similarity). Inhibits the type I interferon response by mediating m6A methylation of IFNB (PubMed:30559377). M6A also takes place in other RNA molecules, such as primary miRNA (pri-miRNAs) (PubMed:25799998). Mediates m6A methylation of Xist RNA, thereby participating in random X inactivation: m6A methylation of Xist leads to target YTHDC1 reader on Xist and promote transcription repression activity of Xist (PubMed:27602518). M6A also regulates cortical neurogenesis: m6A methylation of transcripts related to transcription factors, neural stem cells, the cell cycle and neuronal differentiation during brain development promotes their destabilization and decay, promoting differentiation of radial glial cells (By similarity). METTL3 mediates methylation of pri-miRNAs, marking them for recognition and processing by DGCR8 (PubMed:25799998). Acts as a positive regulator of mRNA translation independently of the methyltransferase activity: promotes translation by interacting with the translation initiation machinery in the cytoplasm (PubMed:27117702). Its overexpression in a number of cancer cells suggests that it may participate in cancer cell proliferation by promoting mRNA translation (PubMed:27117702). During human coronavirus SARS-CoV-2 infection, adds m6A modifications in SARS-CoV-2 RNA leading to decreased RIGI binding and subsequently dampening the sensing and activation of innate immune responses (PubMed:33961823).</text>
</comment>
<comment type="catalytic activity">
    <reaction evidence="14 15 17 20 21 26">
        <text>an adenosine in mRNA + S-adenosyl-L-methionine = an N(6)-methyladenosine in mRNA + S-adenosyl-L-homocysteine + H(+)</text>
        <dbReference type="Rhea" id="RHEA:55584"/>
        <dbReference type="Rhea" id="RHEA-COMP:12414"/>
        <dbReference type="Rhea" id="RHEA-COMP:12417"/>
        <dbReference type="ChEBI" id="CHEBI:15378"/>
        <dbReference type="ChEBI" id="CHEBI:57856"/>
        <dbReference type="ChEBI" id="CHEBI:59789"/>
        <dbReference type="ChEBI" id="CHEBI:74411"/>
        <dbReference type="ChEBI" id="CHEBI:74449"/>
        <dbReference type="EC" id="2.1.1.348"/>
    </reaction>
</comment>
<comment type="activity regulation">
    <text evidence="1 21">Methyltransferase activity is regulated by miRNAs via a sequence pairing mechanism (By similarity). Methyltransferase activity is inhibited by sumoylation (PubMed:29506078).</text>
</comment>
<comment type="subunit">
    <text evidence="6 7 13 14 15 16 17 20 21 22">Heterodimer; heterodimerizes with METTL14 to form an antiparallel heterodimer that constitutes an active methyltransferase (PubMed:27281194, PubMed:27373337, PubMed:27627798). Component of the WMM complex, a N6-methyltransferase complex composed of a catalytic subcomplex, named MAC, and of an associated subcomplex, named MACOM (PubMed:24407421, PubMed:24981863, PubMed:27602518, PubMed:29348140, PubMed:29506078, PubMed:29507755). The MAC subcomplex is composed of METTL3 and METTL14 (PubMed:24407421, PubMed:24981863, PubMed:27602518, PubMed:29507755). The MACOM subcomplex is composed of WTAP, ZC3H13, CBLL1/HAKAI, VIRMA, and, in some cases of RBM15 (RBM15 or RBM15B) (PubMed:27602518, PubMed:29507755). Interacts with NCBP1/CBP80 (PubMed:27117702). Interacts with EIF4E (PubMed:27117702). Interacts with EIF3B (PubMed:27117702).</text>
</comment>
<comment type="interaction">
    <interactant intactId="EBI-11105430">
        <id>Q86U44</id>
    </interactant>
    <interactant intactId="EBI-6661081">
        <id>Q9HCE5</id>
        <label>METTL14</label>
    </interactant>
    <organismsDiffer>false</organismsDiffer>
    <experiments>21</experiments>
</comment>
<comment type="interaction">
    <interactant intactId="EBI-16084936">
        <id>Q86U44-1</id>
    </interactant>
    <interactant intactId="EBI-6661081">
        <id>Q9HCE5</id>
        <label>METTL14</label>
    </interactant>
    <organismsDiffer>false</organismsDiffer>
    <experiments>10</experiments>
</comment>
<comment type="subcellular location">
    <subcellularLocation>
        <location evidence="8 11 13 20 21">Nucleus</location>
    </subcellularLocation>
    <subcellularLocation>
        <location evidence="26">Nucleus speckle</location>
    </subcellularLocation>
    <subcellularLocation>
        <location evidence="13">Cytoplasm</location>
    </subcellularLocation>
    <text evidence="18 26">Colocalizes with speckles in interphase nuclei, suggesting that it may be associated with nuclear pre-mRNA splicing components (PubMed:9409616). In response to ultraviolet irradiation, colocalizes to DNA damage sites however, it probably does not bind DNA but localizes in the vicinity of DNA damage sites (PubMed:28297716).</text>
</comment>
<comment type="alternative products">
    <event type="alternative splicing"/>
    <isoform>
        <id>Q86U44-1</id>
        <name>1</name>
        <sequence type="displayed"/>
    </isoform>
    <isoform>
        <id>Q86U44-2</id>
        <name>2</name>
        <sequence type="described" ref="VSP_007864 VSP_007865 VSP_007866"/>
    </isoform>
</comment>
<comment type="tissue specificity">
    <text evidence="26">Widely expressed at low level. Expressed in spleen, thymus, prostate, testis, ovary, small intestine, colon and peripheral blood leukocytes.</text>
</comment>
<comment type="induction">
    <text evidence="13">Overexpressed in a number of cancer tissues, such as lung adenocarcinoma and colon adenocarcinoma (PubMed:27117702).</text>
</comment>
<comment type="domain">
    <text evidence="14">Gate loop 1 and gate loop 2 regions are adjacent to the S-adenosyl-L-homocysteine-binding site and display large conformational changes upon ligand-binding. They may play an important role in adenosine recognition. The interface loop contributes to the heterodimer interaction.</text>
</comment>
<comment type="PTM">
    <text evidence="21">Sumoylation inhibits the N6-adenosine-methyltransferase activity. Sumoylation does not affect subcellular location or interaction with METTL14. Desumoylated by SENP1.</text>
</comment>
<comment type="similarity">
    <text evidence="2">Belongs to the MT-A70-like family.</text>
</comment>
<name>MTA70_HUMAN</name>
<evidence type="ECO:0000250" key="1">
    <source>
        <dbReference type="UniProtKB" id="Q8C3P7"/>
    </source>
</evidence>
<evidence type="ECO:0000255" key="2">
    <source>
        <dbReference type="PROSITE-ProRule" id="PRU00489"/>
    </source>
</evidence>
<evidence type="ECO:0000256" key="3">
    <source>
        <dbReference type="SAM" id="MobiDB-lite"/>
    </source>
</evidence>
<evidence type="ECO:0000269" key="4">
    <source>
    </source>
</evidence>
<evidence type="ECO:0000269" key="5">
    <source>
    </source>
</evidence>
<evidence type="ECO:0000269" key="6">
    <source>
    </source>
</evidence>
<evidence type="ECO:0000269" key="7">
    <source>
    </source>
</evidence>
<evidence type="ECO:0000269" key="8">
    <source>
    </source>
</evidence>
<evidence type="ECO:0000269" key="9">
    <source>
    </source>
</evidence>
<evidence type="ECO:0000269" key="10">
    <source>
    </source>
</evidence>
<evidence type="ECO:0000269" key="11">
    <source>
    </source>
</evidence>
<evidence type="ECO:0000269" key="12">
    <source>
    </source>
</evidence>
<evidence type="ECO:0000269" key="13">
    <source>
    </source>
</evidence>
<evidence type="ECO:0000269" key="14">
    <source>
    </source>
</evidence>
<evidence type="ECO:0000269" key="15">
    <source>
    </source>
</evidence>
<evidence type="ECO:0000269" key="16">
    <source>
    </source>
</evidence>
<evidence type="ECO:0000269" key="17">
    <source>
    </source>
</evidence>
<evidence type="ECO:0000269" key="18">
    <source>
    </source>
</evidence>
<evidence type="ECO:0000269" key="19">
    <source>
    </source>
</evidence>
<evidence type="ECO:0000269" key="20">
    <source>
    </source>
</evidence>
<evidence type="ECO:0000269" key="21">
    <source>
    </source>
</evidence>
<evidence type="ECO:0000269" key="22">
    <source>
    </source>
</evidence>
<evidence type="ECO:0000269" key="23">
    <source>
    </source>
</evidence>
<evidence type="ECO:0000269" key="24">
    <source>
    </source>
</evidence>
<evidence type="ECO:0000269" key="25">
    <source>
    </source>
</evidence>
<evidence type="ECO:0000269" key="26">
    <source>
    </source>
</evidence>
<evidence type="ECO:0000303" key="27">
    <source>
    </source>
</evidence>
<evidence type="ECO:0000303" key="28">
    <source>
    </source>
</evidence>
<evidence type="ECO:0000303" key="29">
    <source ref="2"/>
</evidence>
<evidence type="ECO:0000305" key="30"/>
<evidence type="ECO:0000312" key="31">
    <source>
        <dbReference type="HGNC" id="HGNC:17563"/>
    </source>
</evidence>
<evidence type="ECO:0007744" key="32">
    <source>
        <dbReference type="PDB" id="5IL0"/>
    </source>
</evidence>
<evidence type="ECO:0007744" key="33">
    <source>
        <dbReference type="PDB" id="5IL1"/>
    </source>
</evidence>
<evidence type="ECO:0007744" key="34">
    <source>
        <dbReference type="PDB" id="5IL2"/>
    </source>
</evidence>
<evidence type="ECO:0007744" key="35">
    <source>
        <dbReference type="PDB" id="5K7U"/>
    </source>
</evidence>
<evidence type="ECO:0007744" key="36">
    <source>
        <dbReference type="PDB" id="5K7W"/>
    </source>
</evidence>
<evidence type="ECO:0007744" key="37">
    <source>
        <dbReference type="PDB" id="5L6D"/>
    </source>
</evidence>
<evidence type="ECO:0007744" key="38">
    <source>
        <dbReference type="PDB" id="5L6E"/>
    </source>
</evidence>
<evidence type="ECO:0007744" key="39">
    <source>
    </source>
</evidence>
<evidence type="ECO:0007744" key="40">
    <source>
    </source>
</evidence>
<evidence type="ECO:0007744" key="41">
    <source>
    </source>
</evidence>
<evidence type="ECO:0007744" key="42">
    <source>
    </source>
</evidence>
<evidence type="ECO:0007744" key="43">
    <source>
    </source>
</evidence>
<evidence type="ECO:0007829" key="44">
    <source>
        <dbReference type="PDB" id="5IL2"/>
    </source>
</evidence>
<evidence type="ECO:0007829" key="45">
    <source>
        <dbReference type="PDB" id="7NHG"/>
    </source>
</evidence>
<evidence type="ECO:0007829" key="46">
    <source>
        <dbReference type="PDB" id="7NID"/>
    </source>
</evidence>
<keyword id="KW-0002">3D-structure</keyword>
<keyword id="KW-0007">Acetylation</keyword>
<keyword id="KW-0025">Alternative splicing</keyword>
<keyword id="KW-0090">Biological rhythms</keyword>
<keyword id="KW-0963">Cytoplasm</keyword>
<keyword id="KW-0221">Differentiation</keyword>
<keyword id="KW-0903">Direct protein sequencing</keyword>
<keyword id="KW-0227">DNA damage</keyword>
<keyword id="KW-0391">Immunity</keyword>
<keyword id="KW-0399">Innate immunity</keyword>
<keyword id="KW-1017">Isopeptide bond</keyword>
<keyword id="KW-0489">Methyltransferase</keyword>
<keyword id="KW-0539">Nucleus</keyword>
<keyword id="KW-0896">Oogenesis</keyword>
<keyword id="KW-0597">Phosphoprotein</keyword>
<keyword id="KW-1267">Proteomics identification</keyword>
<keyword id="KW-1185">Reference proteome</keyword>
<keyword id="KW-0694">RNA-binding</keyword>
<keyword id="KW-0949">S-adenosyl-L-methionine</keyword>
<keyword id="KW-0744">Spermatogenesis</keyword>
<keyword id="KW-0808">Transferase</keyword>
<keyword id="KW-0832">Ubl conjugation</keyword>
<sequence length="580" mass="64474">MSDTWSSIQAHKKQLDSLRERLQRRRKQDSGHLDLRNPEAALSPTFRSDSPVPTAPTSGGPKPSTASAVPELATDPELEKKLLHHLSDLALTLPTDAVSICLAISTPDAPATQDGVESLLQKFAAQELIEVKRGLLQDDAHPTLVTYADHSKLSAMMGAVAEKKGPGEVAGTVTGQKRRAEQDSTTVAAFASSLVSGLNSSASEPAKEPAKKSRKHAASDVDLEIESLLNQQSTKEQQSKKVSQEILELLNTTTAKEQSIVEKFRSRGRAQVQEFCDYGTKEECMKASDADRPCRKLHFRRIINKHTDESLGDCSFLNTCFHMDTCKYVHYEIDACMDSEAPGSKDHTPSQELALTQSVGGDSSADRLFPPQWICCDIRYLDVSILGKFAVVMADPPWDIHMELPYGTLTDDEMRRLNIPVLQDDGFLFLWVTGRAMELGRECLNLWGYERVDEIIWVKTNQLQRIIRTGRTGHWLNHGKEHCLVGVKGNPQGFNQGLDCDVIVAEVRSTSHKPDEIYGMIERLSPGTRKIELFGRPHNVQPNWITLGNQLDGIHLLDPDVVARFKQRYPDGIISKPKNL</sequence>
<protein>
    <recommendedName>
        <fullName evidence="30">N(6)-adenosine-methyltransferase catalytic subunit METTL3</fullName>
        <ecNumber evidence="14 15 17 20 21 26">2.1.1.348</ecNumber>
    </recommendedName>
    <alternativeName>
        <fullName evidence="30">Methyltransferase-like protein 3</fullName>
        <shortName evidence="28">hMETTL3</shortName>
    </alternativeName>
    <alternativeName>
        <fullName>N(6)-adenosine-methyltransferase 70 kDa subunit</fullName>
        <shortName>MT-A70</shortName>
    </alternativeName>
</protein>
<organism>
    <name type="scientific">Homo sapiens</name>
    <name type="common">Human</name>
    <dbReference type="NCBI Taxonomy" id="9606"/>
    <lineage>
        <taxon>Eukaryota</taxon>
        <taxon>Metazoa</taxon>
        <taxon>Chordata</taxon>
        <taxon>Craniata</taxon>
        <taxon>Vertebrata</taxon>
        <taxon>Euteleostomi</taxon>
        <taxon>Mammalia</taxon>
        <taxon>Eutheria</taxon>
        <taxon>Euarchontoglires</taxon>
        <taxon>Primates</taxon>
        <taxon>Haplorrhini</taxon>
        <taxon>Catarrhini</taxon>
        <taxon>Hominidae</taxon>
        <taxon>Homo</taxon>
    </lineage>
</organism>
<feature type="initiator methionine" description="Removed" evidence="41">
    <location>
        <position position="1"/>
    </location>
</feature>
<feature type="chain" id="PRO_0000207630" description="N(6)-adenosine-methyltransferase catalytic subunit METTL3">
    <location>
        <begin position="2"/>
        <end position="580"/>
    </location>
</feature>
<feature type="region of interest" description="Disordered" evidence="3">
    <location>
        <begin position="1"/>
        <end position="70"/>
    </location>
</feature>
<feature type="region of interest" description="Disordered" evidence="3">
    <location>
        <begin position="198"/>
        <end position="219"/>
    </location>
</feature>
<feature type="region of interest" description="Gate loop 1" evidence="27">
    <location>
        <begin position="396"/>
        <end position="410"/>
    </location>
</feature>
<feature type="region of interest" description="Interaction with METTL14" evidence="14 32 33 34">
    <location>
        <begin position="450"/>
        <end position="454"/>
    </location>
</feature>
<feature type="region of interest" description="Interphase loop" evidence="27">
    <location>
        <begin position="462"/>
        <end position="479"/>
    </location>
</feature>
<feature type="region of interest" description="Interaction with METTL14" evidence="14 32 33 34">
    <location>
        <begin position="464"/>
        <end position="480"/>
    </location>
</feature>
<feature type="region of interest" description="Positively charged region required for RNA-binding" evidence="14">
    <location>
        <begin position="465"/>
        <end position="478"/>
    </location>
</feature>
<feature type="region of interest" description="Gate loop 2" evidence="27">
    <location>
        <begin position="507"/>
        <end position="515"/>
    </location>
</feature>
<feature type="short sequence motif" description="Nuclear localization signal" evidence="20">
    <location>
        <begin position="210"/>
        <end position="215"/>
    </location>
</feature>
<feature type="compositionally biased region" description="Basic and acidic residues" evidence="3">
    <location>
        <begin position="28"/>
        <end position="37"/>
    </location>
</feature>
<feature type="binding site" evidence="14 15 17 33 34 35 36 37 38">
    <location>
        <begin position="377"/>
        <end position="378"/>
    </location>
    <ligand>
        <name>S-adenosyl-L-methionine</name>
        <dbReference type="ChEBI" id="CHEBI:59789"/>
    </ligand>
</feature>
<feature type="binding site" evidence="14 15 33 34 35 36">
    <location>
        <position position="395"/>
    </location>
    <ligand>
        <name>S-adenosyl-L-methionine</name>
        <dbReference type="ChEBI" id="CHEBI:59789"/>
    </ligand>
</feature>
<feature type="binding site" evidence="14 15 33 34 35 36">
    <location>
        <position position="513"/>
    </location>
    <ligand>
        <name>S-adenosyl-L-methionine</name>
        <dbReference type="ChEBI" id="CHEBI:59789"/>
    </ligand>
</feature>
<feature type="binding site" evidence="14 15 17 33 34 35 36 37 38">
    <location>
        <begin position="536"/>
        <end position="539"/>
    </location>
    <ligand>
        <name>S-adenosyl-L-methionine</name>
        <dbReference type="ChEBI" id="CHEBI:59789"/>
    </ligand>
</feature>
<feature type="binding site" evidence="14 15 17 33 34 35 36 37 38">
    <location>
        <begin position="549"/>
        <end position="550"/>
    </location>
    <ligand>
        <name>S-adenosyl-L-methionine</name>
        <dbReference type="ChEBI" id="CHEBI:59789"/>
    </ligand>
</feature>
<feature type="site" description="Interaction with METTL14" evidence="14 33 34">
    <location>
        <position position="438"/>
    </location>
</feature>
<feature type="site" description="Interaction with METTL14" evidence="14 33 34">
    <location>
        <position position="441"/>
    </location>
</feature>
<feature type="modified residue" description="N-acetylserine; alternate" evidence="41">
    <location>
        <position position="2"/>
    </location>
</feature>
<feature type="modified residue" description="Phosphoserine; alternate" evidence="20">
    <location>
        <position position="2"/>
    </location>
</feature>
<feature type="modified residue" description="Phosphoserine" evidence="20 39 40 42 43">
    <location>
        <position position="43"/>
    </location>
</feature>
<feature type="modified residue" description="Phosphoserine" evidence="20">
    <location>
        <position position="48"/>
    </location>
</feature>
<feature type="modified residue" description="Phosphoserine" evidence="20">
    <location>
        <position position="50"/>
    </location>
</feature>
<feature type="modified residue" description="Phosphoserine" evidence="20 40 43">
    <location>
        <position position="219"/>
    </location>
</feature>
<feature type="modified residue" description="Phosphoserine" evidence="20 40">
    <location>
        <position position="243"/>
    </location>
</feature>
<feature type="modified residue" description="Phosphothreonine" evidence="20 43">
    <location>
        <position position="348"/>
    </location>
</feature>
<feature type="modified residue" description="Phosphoserine" evidence="20">
    <location>
        <position position="350"/>
    </location>
</feature>
<feature type="cross-link" description="Glycyl lysine isopeptide (Lys-Gly) (interchain with G-Cter in SUMO1)" evidence="21">
    <location>
        <position position="177"/>
    </location>
</feature>
<feature type="cross-link" description="Glycyl lysine isopeptide (Lys-Gly) (interchain with G-Cter in SUMO1)" evidence="21">
    <location>
        <position position="211"/>
    </location>
</feature>
<feature type="cross-link" description="Glycyl lysine isopeptide (Lys-Gly) (interchain with G-Cter in SUMO1)" evidence="21">
    <location>
        <position position="212"/>
    </location>
</feature>
<feature type="cross-link" description="Glycyl lysine isopeptide (Lys-Gly) (interchain with G-Cter in SUMO1)" evidence="21">
    <location>
        <position position="215"/>
    </location>
</feature>
<feature type="splice variant" id="VSP_007864" description="In isoform 2." evidence="29">
    <location>
        <begin position="1"/>
        <end position="284"/>
    </location>
</feature>
<feature type="splice variant" id="VSP_007865" description="In isoform 2." evidence="29">
    <original>GVKGNPQGFNQGLDCDVIVA</original>
    <variation>SSSGAQFNRWSTKKNHLISY</variation>
    <location>
        <begin position="486"/>
        <end position="505"/>
    </location>
</feature>
<feature type="splice variant" id="VSP_007866" description="In isoform 2." evidence="29">
    <location>
        <begin position="506"/>
        <end position="580"/>
    </location>
</feature>
<feature type="sequence variant" id="VAR_076859" description="Found in patients with large intestine cancer; uncertain significance; does not affect interaction with METTL14; abolished RNA methyltransferase activity in vitro." evidence="15">
    <original>Y</original>
    <variation>C</variation>
    <location>
        <position position="406"/>
    </location>
</feature>
<feature type="mutagenesis site" description="Does not affect nuclear localization, interaction with METTL14 or WTAP or catalytic activity; when associated with A-43; A-48 and A-50." evidence="20">
    <original>S</original>
    <variation>A</variation>
    <location>
        <position position="2"/>
    </location>
</feature>
<feature type="mutagenesis site" description="Does not affect nuclear localization, interaction with METTL14 or WTAP or catalytic activity; when associated with A-2; A-48 and A-50." evidence="20">
    <original>S</original>
    <variation>A</variation>
    <location>
        <position position="43"/>
    </location>
</feature>
<feature type="mutagenesis site" description="Does not affect nuclear localization, interaction with METTL14 or WTAP or catalytic activity; when associated with A-2; A-43 and A-50." evidence="20">
    <original>S</original>
    <variation>A</variation>
    <location>
        <position position="48"/>
    </location>
</feature>
<feature type="mutagenesis site" description="Does not affect nuclear localization, interaction with METTL14 or WTAP or catalytic activity; when associated with A-2; A-43 and A-48." evidence="20">
    <original>S</original>
    <variation>A</variation>
    <location>
        <position position="50"/>
    </location>
</feature>
<feature type="mutagenesis site" description="In 4KR; strongly decreased sumoylation; when associated with 211-R--R-215." evidence="21">
    <original>K</original>
    <variation>R</variation>
    <location>
        <position position="177"/>
    </location>
</feature>
<feature type="mutagenesis site" description="Abolishes localization to the nucleus." evidence="20">
    <original>KKSRK</original>
    <variation>GGSGG</variation>
    <location>
        <begin position="211"/>
        <end position="215"/>
    </location>
</feature>
<feature type="mutagenesis site" description="In 3KR; decreased sumoylation. In 4KR; strongly decreased sumoylation; when associated with R-177." evidence="21">
    <original>KKSRK</original>
    <variation>RRSRR</variation>
    <location>
        <begin position="211"/>
        <end position="215"/>
    </location>
</feature>
<feature type="mutagenesis site" description="Does not affect nuclear localization, interaction with METTL14 or WTAP or catalytic activity; when associated with A-243 and 348-A--A-350." evidence="20">
    <original>S</original>
    <variation>A</variation>
    <location>
        <position position="219"/>
    </location>
</feature>
<feature type="mutagenesis site" description="Does not affect nuclear localization, interaction with METTL14 or WTAP or catalytic activity; when associated with A-219 and 348-A--A-350." evidence="20">
    <original>S</original>
    <variation>A</variation>
    <location>
        <position position="243"/>
    </location>
</feature>
<feature type="mutagenesis site" description="Abolishes methyltransferase activity." evidence="15">
    <original>C</original>
    <variation>A</variation>
    <location>
        <position position="294"/>
    </location>
</feature>
<feature type="mutagenesis site" description="Abolishes methyltransferase activity." evidence="15">
    <original>C</original>
    <variation>A</variation>
    <location>
        <position position="326"/>
    </location>
</feature>
<feature type="mutagenesis site" description="Does not affect nuclear localization, interaction with METTL14 or WTAP or catalytic activity; when associated with A-219 and A-243." evidence="20">
    <original>TPS</original>
    <variation>APA</variation>
    <location>
        <begin position="348"/>
        <end position="350"/>
    </location>
</feature>
<feature type="mutagenesis site" description="Abolishes methyltransferase activity." evidence="14">
    <original>D</original>
    <variation>A</variation>
    <location>
        <position position="377"/>
    </location>
</feature>
<feature type="mutagenesis site" description="Loss of function. Abolishes ability to regulate primary miRNA processing. Does not affect ability to promote mRNA translation. Abolishes formation of m6A at DNA damage sites." evidence="9 13 17 18">
    <original>DPPW</original>
    <variation>APPA</variation>
    <location>
        <begin position="395"/>
        <end position="398"/>
    </location>
</feature>
<feature type="mutagenesis site" description="Abolishes methyltransferase activity." evidence="14 15">
    <original>D</original>
    <variation>A</variation>
    <location>
        <position position="395"/>
    </location>
</feature>
<feature type="mutagenesis site" description="Strong reduction in methyltransferase activity." evidence="17">
    <original>Y</original>
    <variation>A</variation>
    <location>
        <position position="406"/>
    </location>
</feature>
<feature type="mutagenesis site" description="Impaired RNA-binding and methyltransferase activities." evidence="14">
    <original>QLQRIIRTGRTGHWLNHG</original>
    <variation>AAAAAA</variation>
    <location>
        <begin position="462"/>
        <end position="479"/>
    </location>
</feature>
<feature type="mutagenesis site" description="Decreased methyltransferase activity." evidence="15">
    <original>W</original>
    <variation>A</variation>
    <location>
        <position position="475"/>
    </location>
</feature>
<feature type="mutagenesis site" description="Decreased methyltransferase activity." evidence="15">
    <original>N</original>
    <variation>A</variation>
    <location>
        <position position="477"/>
    </location>
</feature>
<feature type="mutagenesis site" description="Abolishes methyltransferase activity." evidence="14">
    <original>E</original>
    <variation>A</variation>
    <location>
        <position position="532"/>
    </location>
</feature>
<feature type="mutagenesis site" description="Slight reduction in methyltransferase activity." evidence="14">
    <original>R</original>
    <variation>A</variation>
    <location>
        <position position="536"/>
    </location>
</feature>
<feature type="mutagenesis site" description="Slight reduction in methyltransferase activity." evidence="14">
    <original>H</original>
    <variation>A</variation>
    <location>
        <position position="538"/>
    </location>
</feature>
<feature type="mutagenesis site" description="Abolishes methyltransferase activity." evidence="14">
    <original>N</original>
    <variation>A</variation>
    <location>
        <position position="539"/>
    </location>
</feature>
<feature type="mutagenesis site" description="Slight reduction in methyltransferase activity. Strong reduction in methyltransferase activity; when associated with A-550." evidence="14 17">
    <original>N</original>
    <variation>A</variation>
    <location>
        <position position="549"/>
    </location>
</feature>
<feature type="mutagenesis site" description="Slight reduction in methyltransferase activity. Strong reduction in methyltransferase activity; when associated with A-549." evidence="14 17">
    <original>Q</original>
    <variation>A</variation>
    <location>
        <position position="550"/>
    </location>
</feature>
<feature type="sequence conflict" description="In Ref. 1; AAB71850." evidence="30" ref="1">
    <original>N</original>
    <variation>I</variation>
    <location>
        <position position="251"/>
    </location>
</feature>
<feature type="sequence conflict" description="In Ref. 1; AAB71850." evidence="30" ref="1">
    <original>KF</original>
    <variation>I</variation>
    <location>
        <begin position="263"/>
        <end position="264"/>
    </location>
</feature>
<feature type="sequence conflict" description="In Ref. 1; AAB71850." evidence="30" ref="1">
    <original>D</original>
    <variation>V</variation>
    <location>
        <position position="382"/>
    </location>
</feature>
<feature type="sequence conflict" description="In Ref. 4; AAH52244." evidence="30" ref="4">
    <original>R</original>
    <variation>K</variation>
    <location>
        <position position="568"/>
    </location>
</feature>
<feature type="strand" evidence="44">
    <location>
        <begin position="372"/>
        <end position="376"/>
    </location>
</feature>
<feature type="turn" evidence="44">
    <location>
        <begin position="378"/>
        <end position="380"/>
    </location>
</feature>
<feature type="helix" evidence="44">
    <location>
        <begin position="383"/>
        <end position="386"/>
    </location>
</feature>
<feature type="strand" evidence="44">
    <location>
        <begin position="390"/>
        <end position="394"/>
    </location>
</feature>
<feature type="turn" evidence="46">
    <location>
        <begin position="405"/>
        <end position="407"/>
    </location>
</feature>
<feature type="helix" evidence="44">
    <location>
        <begin position="411"/>
        <end position="416"/>
    </location>
</feature>
<feature type="helix" evidence="44">
    <location>
        <begin position="419"/>
        <end position="422"/>
    </location>
</feature>
<feature type="strand" evidence="44">
    <location>
        <begin position="424"/>
        <end position="432"/>
    </location>
</feature>
<feature type="helix" evidence="44">
    <location>
        <begin position="436"/>
        <end position="446"/>
    </location>
</feature>
<feature type="strand" evidence="44">
    <location>
        <begin position="450"/>
        <end position="460"/>
    </location>
</feature>
<feature type="strand" evidence="44">
    <location>
        <begin position="464"/>
        <end position="466"/>
    </location>
</feature>
<feature type="strand" evidence="44">
    <location>
        <begin position="473"/>
        <end position="477"/>
    </location>
</feature>
<feature type="strand" evidence="44">
    <location>
        <begin position="480"/>
        <end position="489"/>
    </location>
</feature>
<feature type="strand" evidence="44">
    <location>
        <begin position="498"/>
        <end position="506"/>
    </location>
</feature>
<feature type="strand" evidence="44">
    <location>
        <begin position="510"/>
        <end position="512"/>
    </location>
</feature>
<feature type="helix" evidence="44">
    <location>
        <begin position="516"/>
        <end position="524"/>
    </location>
</feature>
<feature type="strand" evidence="44">
    <location>
        <begin position="530"/>
        <end position="534"/>
    </location>
</feature>
<feature type="helix" evidence="44">
    <location>
        <begin position="537"/>
        <end position="539"/>
    </location>
</feature>
<feature type="strand" evidence="44">
    <location>
        <begin position="544"/>
        <end position="548"/>
    </location>
</feature>
<feature type="strand" evidence="44">
    <location>
        <begin position="553"/>
        <end position="555"/>
    </location>
</feature>
<feature type="helix" evidence="44">
    <location>
        <begin position="559"/>
        <end position="568"/>
    </location>
</feature>
<feature type="strand" evidence="45">
    <location>
        <begin position="570"/>
        <end position="572"/>
    </location>
</feature>
<reference key="1">
    <citation type="journal article" date="1997" name="RNA">
        <title>Purification and cDNA cloning of the AdoMet-binding subunit of the human mRNA (N6-adenosine)-methyltransferase.</title>
        <authorList>
            <person name="Bokar J.A."/>
            <person name="Shambaugh M.E."/>
            <person name="Polayes D."/>
            <person name="Matera A.G."/>
            <person name="Rottman F.M."/>
        </authorList>
    </citation>
    <scope>NUCLEOTIDE SEQUENCE [GENOMIC DNA] (ISOFORM 1)</scope>
    <scope>PROTEIN SEQUENCE OF 48-56; 134-149 AND 509-522</scope>
    <scope>FUNCTION</scope>
    <scope>SUBCELLULAR LOCATION</scope>
    <scope>TISSUE SPECIFICITY</scope>
    <scope>CATALYTIC ACTIVITY</scope>
</reference>
<reference key="2">
    <citation type="submission" date="2003-02" db="EMBL/GenBank/DDBJ databases">
        <title>Full-length cDNA libraries and normalization.</title>
        <authorList>
            <person name="Li W.B."/>
            <person name="Gruber C."/>
            <person name="Jessee J."/>
            <person name="Polayes D."/>
        </authorList>
    </citation>
    <scope>NUCLEOTIDE SEQUENCE [LARGE SCALE MRNA] (ISOFORM 2)</scope>
    <source>
        <tissue>Placenta</tissue>
    </source>
</reference>
<reference key="3">
    <citation type="journal article" date="2003" name="Nature">
        <title>The DNA sequence and analysis of human chromosome 14.</title>
        <authorList>
            <person name="Heilig R."/>
            <person name="Eckenberg R."/>
            <person name="Petit J.-L."/>
            <person name="Fonknechten N."/>
            <person name="Da Silva C."/>
            <person name="Cattolico L."/>
            <person name="Levy M."/>
            <person name="Barbe V."/>
            <person name="De Berardinis V."/>
            <person name="Ureta-Vidal A."/>
            <person name="Pelletier E."/>
            <person name="Vico V."/>
            <person name="Anthouard V."/>
            <person name="Rowen L."/>
            <person name="Madan A."/>
            <person name="Qin S."/>
            <person name="Sun H."/>
            <person name="Du H."/>
            <person name="Pepin K."/>
            <person name="Artiguenave F."/>
            <person name="Robert C."/>
            <person name="Cruaud C."/>
            <person name="Bruels T."/>
            <person name="Jaillon O."/>
            <person name="Friedlander L."/>
            <person name="Samson G."/>
            <person name="Brottier P."/>
            <person name="Cure S."/>
            <person name="Segurens B."/>
            <person name="Aniere F."/>
            <person name="Samain S."/>
            <person name="Crespeau H."/>
            <person name="Abbasi N."/>
            <person name="Aiach N."/>
            <person name="Boscus D."/>
            <person name="Dickhoff R."/>
            <person name="Dors M."/>
            <person name="Dubois I."/>
            <person name="Friedman C."/>
            <person name="Gouyvenoux M."/>
            <person name="James R."/>
            <person name="Madan A."/>
            <person name="Mairey-Estrada B."/>
            <person name="Mangenot S."/>
            <person name="Martins N."/>
            <person name="Menard M."/>
            <person name="Oztas S."/>
            <person name="Ratcliffe A."/>
            <person name="Shaffer T."/>
            <person name="Trask B."/>
            <person name="Vacherie B."/>
            <person name="Bellemere C."/>
            <person name="Belser C."/>
            <person name="Besnard-Gonnet M."/>
            <person name="Bartol-Mavel D."/>
            <person name="Boutard M."/>
            <person name="Briez-Silla S."/>
            <person name="Combette S."/>
            <person name="Dufosse-Laurent V."/>
            <person name="Ferron C."/>
            <person name="Lechaplais C."/>
            <person name="Louesse C."/>
            <person name="Muselet D."/>
            <person name="Magdelenat G."/>
            <person name="Pateau E."/>
            <person name="Petit E."/>
            <person name="Sirvain-Trukniewicz P."/>
            <person name="Trybou A."/>
            <person name="Vega-Czarny N."/>
            <person name="Bataille E."/>
            <person name="Bluet E."/>
            <person name="Bordelais I."/>
            <person name="Dubois M."/>
            <person name="Dumont C."/>
            <person name="Guerin T."/>
            <person name="Haffray S."/>
            <person name="Hammadi R."/>
            <person name="Muanga J."/>
            <person name="Pellouin V."/>
            <person name="Robert D."/>
            <person name="Wunderle E."/>
            <person name="Gauguet G."/>
            <person name="Roy A."/>
            <person name="Sainte-Marthe L."/>
            <person name="Verdier J."/>
            <person name="Verdier-Discala C."/>
            <person name="Hillier L.W."/>
            <person name="Fulton L."/>
            <person name="McPherson J."/>
            <person name="Matsuda F."/>
            <person name="Wilson R."/>
            <person name="Scarpelli C."/>
            <person name="Gyapay G."/>
            <person name="Wincker P."/>
            <person name="Saurin W."/>
            <person name="Quetier F."/>
            <person name="Waterston R."/>
            <person name="Hood L."/>
            <person name="Weissenbach J."/>
        </authorList>
    </citation>
    <scope>NUCLEOTIDE SEQUENCE [LARGE SCALE GENOMIC DNA]</scope>
</reference>
<reference key="4">
    <citation type="journal article" date="2004" name="Genome Res.">
        <title>The status, quality, and expansion of the NIH full-length cDNA project: the Mammalian Gene Collection (MGC).</title>
        <authorList>
            <consortium name="The MGC Project Team"/>
        </authorList>
    </citation>
    <scope>NUCLEOTIDE SEQUENCE [LARGE SCALE MRNA] (ISOFORM 1)</scope>
    <source>
        <tissue>Lung</tissue>
        <tissue>Pancreas</tissue>
    </source>
</reference>
<reference key="5">
    <citation type="journal article" date="2006" name="Nat. Biotechnol.">
        <title>A probability-based approach for high-throughput protein phosphorylation analysis and site localization.</title>
        <authorList>
            <person name="Beausoleil S.A."/>
            <person name="Villen J."/>
            <person name="Gerber S.A."/>
            <person name="Rush J."/>
            <person name="Gygi S.P."/>
        </authorList>
    </citation>
    <scope>PHOSPHORYLATION [LARGE SCALE ANALYSIS] AT SER-43</scope>
    <scope>IDENTIFICATION BY MASS SPECTROMETRY [LARGE SCALE ANALYSIS]</scope>
    <source>
        <tissue>Cervix carcinoma</tissue>
    </source>
</reference>
<reference key="6">
    <citation type="journal article" date="2007" name="Science">
        <title>ATM and ATR substrate analysis reveals extensive protein networks responsive to DNA damage.</title>
        <authorList>
            <person name="Matsuoka S."/>
            <person name="Ballif B.A."/>
            <person name="Smogorzewska A."/>
            <person name="McDonald E.R. III"/>
            <person name="Hurov K.E."/>
            <person name="Luo J."/>
            <person name="Bakalarski C.E."/>
            <person name="Zhao Z."/>
            <person name="Solimini N."/>
            <person name="Lerenthal Y."/>
            <person name="Shiloh Y."/>
            <person name="Gygi S.P."/>
            <person name="Elledge S.J."/>
        </authorList>
    </citation>
    <scope>IDENTIFICATION BY MASS SPECTROMETRY [LARGE SCALE ANALYSIS]</scope>
    <source>
        <tissue>Embryonic kidney</tissue>
    </source>
</reference>
<reference key="7">
    <citation type="journal article" date="2008" name="Proc. Natl. Acad. Sci. U.S.A.">
        <title>A quantitative atlas of mitotic phosphorylation.</title>
        <authorList>
            <person name="Dephoure N."/>
            <person name="Zhou C."/>
            <person name="Villen J."/>
            <person name="Beausoleil S.A."/>
            <person name="Bakalarski C.E."/>
            <person name="Elledge S.J."/>
            <person name="Gygi S.P."/>
        </authorList>
    </citation>
    <scope>PHOSPHORYLATION [LARGE SCALE ANALYSIS] AT SER-43; SER-219 AND SER-243</scope>
    <scope>IDENTIFICATION BY MASS SPECTROMETRY [LARGE SCALE ANALYSIS]</scope>
    <source>
        <tissue>Cervix carcinoma</tissue>
    </source>
</reference>
<reference key="8">
    <citation type="journal article" date="2009" name="Anal. Chem.">
        <title>Lys-N and trypsin cover complementary parts of the phosphoproteome in a refined SCX-based approach.</title>
        <authorList>
            <person name="Gauci S."/>
            <person name="Helbig A.O."/>
            <person name="Slijper M."/>
            <person name="Krijgsveld J."/>
            <person name="Heck A.J."/>
            <person name="Mohammed S."/>
        </authorList>
    </citation>
    <scope>ACETYLATION [LARGE SCALE ANALYSIS] AT SER-2</scope>
    <scope>CLEAVAGE OF INITIATOR METHIONINE [LARGE SCALE ANALYSIS]</scope>
    <scope>IDENTIFICATION BY MASS SPECTROMETRY [LARGE SCALE ANALYSIS]</scope>
</reference>
<reference key="9">
    <citation type="journal article" date="2009" name="Sci. Signal.">
        <title>Quantitative phosphoproteomic analysis of T cell receptor signaling reveals system-wide modulation of protein-protein interactions.</title>
        <authorList>
            <person name="Mayya V."/>
            <person name="Lundgren D.H."/>
            <person name="Hwang S.-I."/>
            <person name="Rezaul K."/>
            <person name="Wu L."/>
            <person name="Eng J.K."/>
            <person name="Rodionov V."/>
            <person name="Han D.K."/>
        </authorList>
    </citation>
    <scope>IDENTIFICATION BY MASS SPECTROMETRY [LARGE SCALE ANALYSIS]</scope>
    <source>
        <tissue>Leukemic T-cell</tissue>
    </source>
</reference>
<reference key="10">
    <citation type="journal article" date="2010" name="Sci. Signal.">
        <title>Quantitative phosphoproteomics reveals widespread full phosphorylation site occupancy during mitosis.</title>
        <authorList>
            <person name="Olsen J.V."/>
            <person name="Vermeulen M."/>
            <person name="Santamaria A."/>
            <person name="Kumar C."/>
            <person name="Miller M.L."/>
            <person name="Jensen L.J."/>
            <person name="Gnad F."/>
            <person name="Cox J."/>
            <person name="Jensen T.S."/>
            <person name="Nigg E.A."/>
            <person name="Brunak S."/>
            <person name="Mann M."/>
        </authorList>
    </citation>
    <scope>PHOSPHORYLATION [LARGE SCALE ANALYSIS] AT SER-43</scope>
    <scope>IDENTIFICATION BY MASS SPECTROMETRY [LARGE SCALE ANALYSIS]</scope>
    <source>
        <tissue>Cervix carcinoma</tissue>
    </source>
</reference>
<reference key="11">
    <citation type="journal article" date="2011" name="BMC Syst. Biol.">
        <title>Initial characterization of the human central proteome.</title>
        <authorList>
            <person name="Burkard T.R."/>
            <person name="Planyavsky M."/>
            <person name="Kaupe I."/>
            <person name="Breitwieser F.P."/>
            <person name="Buerckstuemmer T."/>
            <person name="Bennett K.L."/>
            <person name="Superti-Furga G."/>
            <person name="Colinge J."/>
        </authorList>
    </citation>
    <scope>IDENTIFICATION BY MASS SPECTROMETRY [LARGE SCALE ANALYSIS]</scope>
</reference>
<reference key="12">
    <citation type="journal article" date="2012" name="Nature">
        <title>Topology of the human and mouse m6A RNA methylomes revealed by m6A-seq.</title>
        <authorList>
            <person name="Dominissini D."/>
            <person name="Moshitch-Moshkovitz S."/>
            <person name="Schwartz S."/>
            <person name="Salmon-Divon M."/>
            <person name="Ungar L."/>
            <person name="Osenberg S."/>
            <person name="Cesarkas K."/>
            <person name="Jacob-Hirsch J."/>
            <person name="Amariglio N."/>
            <person name="Kupiec M."/>
            <person name="Sorek R."/>
            <person name="Rechavi G."/>
        </authorList>
    </citation>
    <scope>FUNCTION</scope>
</reference>
<reference key="13">
    <citation type="journal article" date="2013" name="J. Proteome Res.">
        <title>Toward a comprehensive characterization of a human cancer cell phosphoproteome.</title>
        <authorList>
            <person name="Zhou H."/>
            <person name="Di Palma S."/>
            <person name="Preisinger C."/>
            <person name="Peng M."/>
            <person name="Polat A.N."/>
            <person name="Heck A.J."/>
            <person name="Mohammed S."/>
        </authorList>
    </citation>
    <scope>PHOSPHORYLATION [LARGE SCALE ANALYSIS] AT SER-43; SER-219 AND THR-348</scope>
    <scope>IDENTIFICATION BY MASS SPECTROMETRY [LARGE SCALE ANALYSIS]</scope>
    <source>
        <tissue>Cervix carcinoma</tissue>
        <tissue>Erythroleukemia</tissue>
    </source>
</reference>
<reference key="14">
    <citation type="journal article" date="2014" name="Cell Res.">
        <title>Mammalian WTAP is a regulatory subunit of the RNA N6-methyladenosine methyltransferase.</title>
        <authorList>
            <person name="Ping X.L."/>
            <person name="Sun B.F."/>
            <person name="Wang L."/>
            <person name="Xiao W."/>
            <person name="Yang X."/>
            <person name="Wang W.J."/>
            <person name="Adhikari S."/>
            <person name="Shi Y."/>
            <person name="Lv Y."/>
            <person name="Chen Y.S."/>
            <person name="Zhao X."/>
            <person name="Li A."/>
            <person name="Yang Y."/>
            <person name="Dahal U."/>
            <person name="Lou X.M."/>
            <person name="Liu X."/>
            <person name="Huang J."/>
            <person name="Yuan W.P."/>
            <person name="Zhu X.F."/>
            <person name="Cheng T."/>
            <person name="Zhao Y.L."/>
            <person name="Wang X."/>
            <person name="Danielsen J.M."/>
            <person name="Liu F."/>
            <person name="Yang Y.G."/>
        </authorList>
    </citation>
    <scope>IDENTIFICATION IN THE WMM COMPLEX</scope>
</reference>
<reference key="15">
    <citation type="journal article" date="2014" name="Cell Rep.">
        <title>Perturbation of m6A writers reveals two distinct classes of mRNA methylation at internal and 5' sites.</title>
        <authorList>
            <person name="Schwartz S."/>
            <person name="Mumbach M.R."/>
            <person name="Jovanovic M."/>
            <person name="Wang T."/>
            <person name="Maciag K."/>
            <person name="Bushkin G.G."/>
            <person name="Mertins P."/>
            <person name="Ter-Ovanesyan D."/>
            <person name="Habib N."/>
            <person name="Cacchiarelli D."/>
            <person name="Sanjana N.E."/>
            <person name="Freinkman E."/>
            <person name="Pacold M.E."/>
            <person name="Satija R."/>
            <person name="Mikkelsen T.S."/>
            <person name="Hacohen N."/>
            <person name="Zhang F."/>
            <person name="Carr S.A."/>
            <person name="Lander E.S."/>
            <person name="Regev A."/>
        </authorList>
    </citation>
    <scope>IDENTIFICATION IN THE WMM COMPLEX</scope>
</reference>
<reference key="16">
    <citation type="journal article" date="2014" name="J. Proteomics">
        <title>An enzyme assisted RP-RPLC approach for in-depth analysis of human liver phosphoproteome.</title>
        <authorList>
            <person name="Bian Y."/>
            <person name="Song C."/>
            <person name="Cheng K."/>
            <person name="Dong M."/>
            <person name="Wang F."/>
            <person name="Huang J."/>
            <person name="Sun D."/>
            <person name="Wang L."/>
            <person name="Ye M."/>
            <person name="Zou H."/>
        </authorList>
    </citation>
    <scope>IDENTIFICATION BY MASS SPECTROMETRY [LARGE SCALE ANALYSIS]</scope>
    <source>
        <tissue>Liver</tissue>
    </source>
</reference>
<reference key="17">
    <citation type="journal article" date="2014" name="Nature">
        <title>N-methyladenosine-dependent regulation of messenger RNA stability.</title>
        <authorList>
            <person name="Wang X."/>
            <person name="Lu Z."/>
            <person name="Gomez A."/>
            <person name="Hon G.C."/>
            <person name="Yue Y."/>
            <person name="Han D."/>
            <person name="Fu Y."/>
            <person name="Parisien M."/>
            <person name="Dai Q."/>
            <person name="Jia G."/>
            <person name="Ren B."/>
            <person name="Pan T."/>
            <person name="He C."/>
        </authorList>
    </citation>
    <scope>FUNCTION</scope>
</reference>
<reference key="18">
    <citation type="journal article" date="2015" name="Nature">
        <title>N(6)-methyladenosine-dependent RNA structural switches regulate RNA-protein interactions.</title>
        <authorList>
            <person name="Liu N."/>
            <person name="Dai Q."/>
            <person name="Zheng G."/>
            <person name="He C."/>
            <person name="Parisien M."/>
            <person name="Pan T."/>
        </authorList>
    </citation>
    <scope>FUNCTION</scope>
</reference>
<reference key="19">
    <citation type="journal article" date="2015" name="Nature">
        <title>N6-methyladenosine marks primary microRNAs for processing.</title>
        <authorList>
            <person name="Alarcon C.R."/>
            <person name="Lee H."/>
            <person name="Goodarzi H."/>
            <person name="Halberg N."/>
            <person name="Tavazoie S.F."/>
        </authorList>
    </citation>
    <scope>FUNCTION</scope>
    <scope>MUTAGENESIS OF 395-ASP--TRP-398</scope>
</reference>
<reference key="20">
    <citation type="journal article" date="2015" name="Cell">
        <title>HNRNPA2B1 is a mediator of m(6)A-dependent nuclear RNA processing events.</title>
        <authorList>
            <person name="Alarcon C.R."/>
            <person name="Goodarzi H."/>
            <person name="Lee H."/>
            <person name="Liu X."/>
            <person name="Tavazoie S."/>
            <person name="Tavazoie S.F."/>
        </authorList>
    </citation>
    <scope>FUNCTION</scope>
</reference>
<reference key="21">
    <citation type="journal article" date="2015" name="Cell">
        <title>5' UTR m(6)A promotes cap-independent translation.</title>
        <authorList>
            <person name="Meyer K.D."/>
            <person name="Patil D.P."/>
            <person name="Zhou J."/>
            <person name="Zinoviev A."/>
            <person name="Skabkin M.A."/>
            <person name="Elemento O."/>
            <person name="Pestova T.V."/>
            <person name="Qian S.B."/>
            <person name="Jaffrey S.R."/>
        </authorList>
    </citation>
    <scope>FUNCTION</scope>
</reference>
<reference key="22">
    <citation type="journal article" date="2015" name="Nature">
        <title>Dynamic m(6)A mRNA methylation directs translational control of heat shock response.</title>
        <authorList>
            <person name="Zhou J."/>
            <person name="Wan J."/>
            <person name="Gao X."/>
            <person name="Zhang X."/>
            <person name="Jaffrey S.R."/>
            <person name="Qian S.B."/>
        </authorList>
    </citation>
    <scope>SUBCELLULAR LOCATION</scope>
</reference>
<reference key="23">
    <citation type="journal article" date="2016" name="Mol. Cell">
        <title>The m(6)A methyltransferase METTL3 promotes translation in human cancer cells.</title>
        <authorList>
            <person name="Lin S."/>
            <person name="Choe J."/>
            <person name="Du P."/>
            <person name="Triboulet R."/>
            <person name="Gregory R.I."/>
        </authorList>
    </citation>
    <scope>FUNCTION</scope>
    <scope>SUBCELLULAR LOCATION</scope>
    <scope>INDUCTION</scope>
    <scope>INTERACTION WITH NCBP1; EIF4E AND EIF3B</scope>
    <scope>MUTAGENESIS OF 395-ASP--TRP-398</scope>
</reference>
<reference key="24">
    <citation type="journal article" date="2016" name="Nature">
        <title>m(6)A RNA methylation promotes XIST-mediated transcriptional repression.</title>
        <authorList>
            <person name="Patil D.P."/>
            <person name="Chen C.K."/>
            <person name="Pickering B.F."/>
            <person name="Chow A."/>
            <person name="Jackson C."/>
            <person name="Guttman M."/>
            <person name="Jaffrey S.R."/>
        </authorList>
    </citation>
    <scope>FUNCTION</scope>
    <scope>IDENTIFICATION IN THE WMM COMPLEX</scope>
</reference>
<reference key="25">
    <citation type="journal article" date="2017" name="Genes Dev.">
        <title>m(6)A mRNA modifications are deposited in nascent pre-mRNA and are not required for splicing but do specify cytoplasmic turnover.</title>
        <authorList>
            <person name="Ke S."/>
            <person name="Pandya-Jones A."/>
            <person name="Saito Y."/>
            <person name="Fak J.J."/>
            <person name="Vaagboe C.B."/>
            <person name="Geula S."/>
            <person name="Hanna J.H."/>
            <person name="Black D.L."/>
            <person name="Darnell J.E. Jr."/>
            <person name="Darnell R.B."/>
        </authorList>
    </citation>
    <scope>FUNCTION</scope>
</reference>
<reference key="26">
    <citation type="journal article" date="2017" name="Nature">
        <title>RNA m(6)A methylation regulates the ultraviolet-induced DNA damage response.</title>
        <authorList>
            <person name="Xiang Y."/>
            <person name="Laurent B."/>
            <person name="Hsu C.H."/>
            <person name="Nachtergaele S."/>
            <person name="Lu Z."/>
            <person name="Sheng W."/>
            <person name="Xu C."/>
            <person name="Chen H."/>
            <person name="Ouyang J."/>
            <person name="Wang S."/>
            <person name="Ling D."/>
            <person name="Hsu P.H."/>
            <person name="Zou L."/>
            <person name="Jambhekar A."/>
            <person name="He C."/>
            <person name="Shi Y."/>
        </authorList>
    </citation>
    <scope>FUNCTION</scope>
    <scope>SUBCELLULAR LOCATION</scope>
    <scope>MUTAGENESIS OF 395-ASP--TRP-398</scope>
</reference>
<reference key="27">
    <citation type="journal article" date="2017" name="Nature">
        <authorList>
            <person name="Xiang Y."/>
            <person name="Laurent B."/>
            <person name="Hsu C.H."/>
            <person name="Nachtergaele S."/>
            <person name="Lu Z."/>
            <person name="Sheng W."/>
            <person name="Xu C."/>
            <person name="Chen H."/>
            <person name="Ouyang J."/>
            <person name="Wang S."/>
            <person name="Ling D."/>
            <person name="Hsu P.H."/>
            <person name="Zou L."/>
            <person name="Jambhekar A."/>
            <person name="He C."/>
            <person name="Shi Y."/>
        </authorList>
    </citation>
    <scope>ERRATUM OF PUBMED:28297716</scope>
</reference>
<reference key="28">
    <citation type="journal article" date="2018" name="Cell Discov.">
        <title>VIRMA mediates preferential m6A mRNA methylation in 3'UTR and near stop codon and associates with alternative polyadenylation.</title>
        <authorList>
            <person name="Yue Y."/>
            <person name="Liu J."/>
            <person name="Cui X."/>
            <person name="Cao J."/>
            <person name="Luo G."/>
            <person name="Zhang Z."/>
            <person name="Cheng T."/>
            <person name="Gao M."/>
            <person name="Shu X."/>
            <person name="Ma H."/>
            <person name="Wang F."/>
            <person name="Wang X."/>
            <person name="Shen B."/>
            <person name="Wang Y."/>
            <person name="Feng X."/>
            <person name="He C."/>
            <person name="Liu J."/>
        </authorList>
    </citation>
    <scope>IDENTIFICATION IN THE WMM COMPLEX</scope>
</reference>
<reference key="29">
    <citation type="journal article" date="2018" name="Cell Rep.">
        <title>Circadian clock regulation of hepatic lipid metabolism by modulation of m6A mRNA methylation.</title>
        <authorList>
            <person name="Zhong X."/>
            <person name="Yu J."/>
            <person name="Frazier K."/>
            <person name="Weng X."/>
            <person name="Li Y."/>
            <person name="Cham C.M."/>
            <person name="Dolan K."/>
            <person name="Zhu X."/>
            <person name="Hubert N."/>
            <person name="Tao Y."/>
            <person name="Lin F."/>
            <person name="Martinez-Guryn K."/>
            <person name="Huang Y."/>
            <person name="Wang T."/>
            <person name="Liu J."/>
            <person name="He C."/>
            <person name="Chang E.B."/>
            <person name="Leone V."/>
        </authorList>
    </citation>
    <scope>FUNCTION</scope>
</reference>
<reference key="30">
    <citation type="journal article" date="2018" name="Nucleic Acids Res.">
        <title>SUMOylation of the m6A-RNA methyltransferase METTL3 modulates its function.</title>
        <authorList>
            <person name="Du Y."/>
            <person name="Hou G."/>
            <person name="Zhang H."/>
            <person name="Dou J."/>
            <person name="He J."/>
            <person name="Guo Y."/>
            <person name="Li L."/>
            <person name="Chen R."/>
            <person name="Wang Y."/>
            <person name="Deng R."/>
            <person name="Huang J."/>
            <person name="Jiang B."/>
            <person name="Xu M."/>
            <person name="Cheng J."/>
            <person name="Chen G.Q."/>
            <person name="Zhao X."/>
            <person name="Yu J."/>
        </authorList>
    </citation>
    <scope>FUNCTION</scope>
    <scope>SUBCELLULAR LOCATION</scope>
    <scope>CATALYTIC ACTIVITY</scope>
    <scope>ACTIVITY REGULATION</scope>
    <scope>IDENTIFICATION IN THE WMM COMPLEX</scope>
    <scope>SUMOYLATION AT LYS-177; LYS-211; LYS-212 AND LYS-215</scope>
    <scope>MUTAGENESIS OF LYS-177 AND 211-LYS--LYS-215</scope>
</reference>
<reference key="31">
    <citation type="journal article" date="2018" name="RNA">
        <title>Interactions, localization, and phosphorylation of the m6A generating METTL3-METTL14-WTAP complex.</title>
        <authorList>
            <person name="Schoeller E."/>
            <person name="Weichmann F."/>
            <person name="Treiber T."/>
            <person name="Ringle S."/>
            <person name="Treiber N."/>
            <person name="Flatley A."/>
            <person name="Feederle R."/>
            <person name="Bruckmann A."/>
            <person name="Meister G."/>
        </authorList>
    </citation>
    <scope>FUNCTION</scope>
    <scope>CATALYTIC ACTIVITY</scope>
    <scope>IDENTIFICATION IN THE WMM COMPLEX</scope>
    <scope>PHOSPHORYLATION AT SER-2; SER-43; SER-48; SER-50; SER-219; SER-243; THR-348 AND SER-350</scope>
    <scope>MUTAGENESIS OF SER-2; SER-43; SER-48; SER-50; SER-219; SER-243; 211-LYS--LYS-215 AND 348-THR--SER-350</scope>
</reference>
<reference key="32">
    <citation type="journal article" date="2019" name="Nat. Immunol.">
        <title>m6A modification controls the innate immune response to infection by targeting type I interferons.</title>
        <authorList>
            <person name="Winkler R."/>
            <person name="Gillis E."/>
            <person name="Lasman L."/>
            <person name="Safra M."/>
            <person name="Geula S."/>
            <person name="Soyris C."/>
            <person name="Nachshon A."/>
            <person name="Tai-Schmiedel J."/>
            <person name="Friedman N."/>
            <person name="Le-Trilling V.T.K."/>
            <person name="Trilling M."/>
            <person name="Mandelboim M."/>
            <person name="Hanna J.H."/>
            <person name="Schwartz S."/>
            <person name="Stern-Ginossar N."/>
        </authorList>
    </citation>
    <scope>FUNCTION</scope>
</reference>
<reference key="33">
    <citation type="journal article" date="2021" name="Cell Rep.">
        <title>METTL3 regulates viral m6A RNA modification and host cell innate immune responses during SARS-CoV-2 infection.</title>
        <authorList>
            <person name="Li N."/>
            <person name="Hui H."/>
            <person name="Bray B."/>
            <person name="Gonzalez G.M."/>
            <person name="Zeller M."/>
            <person name="Anderson K.G."/>
            <person name="Knight R."/>
            <person name="Smith D."/>
            <person name="Wang Y."/>
            <person name="Carlin A.F."/>
            <person name="Rana T.M."/>
        </authorList>
    </citation>
    <scope>FUNCTION</scope>
</reference>
<reference key="34">
    <citation type="journal article" date="2016" name="Elife">
        <title>Structural insights into the molecular mechanism of the m(6)A writer complex.</title>
        <authorList>
            <person name="Sledz P."/>
            <person name="Jinek M."/>
        </authorList>
    </citation>
    <scope>X-RAY CRYSTALLOGRAPHY (1.85 ANGSTROMS) OF 354-580 IN COMPLEX WITH METTL14 AND S-ADENOSYL-L-METHIONINE</scope>
    <scope>FUNCTION</scope>
    <scope>CATALYTIC ACTIVITY</scope>
    <scope>SUBUNIT</scope>
    <scope>MUTAGENESIS OF ASP-395; TYR-406; ASN-549 AND GLN-550</scope>
</reference>
<reference key="35">
    <citation type="journal article" date="2016" name="Mol. Cell">
        <title>Structural basis for cooperative function of Mettl3 and Mettl14 methyltransferases.</title>
        <authorList>
            <person name="Wang P."/>
            <person name="Doxtader K.A."/>
            <person name="Nam Y."/>
        </authorList>
    </citation>
    <scope>X-RAY CRYSTALLOGRAPHY (1.65 ANGSTROMS) OF 357-580 IN COMPLEX WITH METTL14 AND S-ADENOSYL-L-METHIONINE</scope>
    <scope>FUNCTION</scope>
    <scope>CATALYTIC ACTIVITY</scope>
    <scope>SUBUNIT</scope>
    <scope>MUTAGENESIS OF CYS-294; CYS-326; ASP-395; TRP-475 AND ASN-477</scope>
    <scope>VARIANT CYS-406</scope>
    <scope>CHARACTERIZATION OF VARIANT CYS-406</scope>
</reference>
<reference key="36">
    <citation type="journal article" date="2016" name="Nature">
        <title>Structural basis of N(6)-adenosine methylation by the METTL3-METTL14 complex.</title>
        <authorList>
            <person name="Wang X."/>
            <person name="Feng J."/>
            <person name="Xue Y."/>
            <person name="Guan Z."/>
            <person name="Zhang D."/>
            <person name="Liu Z."/>
            <person name="Gong Z."/>
            <person name="Wang Q."/>
            <person name="Huang J."/>
            <person name="Tang C."/>
            <person name="Zou T."/>
            <person name="Yin P."/>
        </authorList>
    </citation>
    <scope>X-RAY CRYSTALLOGRAPHY (1.61 ANGSTROMS) OF 369-580 IN COMPLEX WITH METTL14 AND S-ADENOSYL-L-METHIONINE</scope>
    <scope>FUNCTION</scope>
    <scope>CATALYTIC ACTIVITY</scope>
    <scope>SUBUNIT</scope>
    <scope>DOMAIN</scope>
    <scope>MUTAGENESIS OF ASP-377; ASP-395; 462-GLN--GLY-479; GLU-532; ARG-536; HIS-538; ASN-539; ASN-549 AND GLN-550</scope>
</reference>
<proteinExistence type="evidence at protein level"/>
<gene>
    <name evidence="31" type="primary">METTL3</name>
    <name type="synonym">MTA70</name>
</gene>